<accession>B5F7J9</accession>
<keyword id="KW-0119">Carbohydrate metabolism</keyword>
<keyword id="KW-0963">Cytoplasm</keyword>
<keyword id="KW-0456">Lyase</keyword>
<keyword id="KW-0704">Schiff base</keyword>
<protein>
    <recommendedName>
        <fullName evidence="1">N-acetylneuraminate lyase</fullName>
        <shortName evidence="1">NAL</shortName>
        <shortName evidence="1">Neu5Ac lyase</shortName>
        <ecNumber evidence="1">4.1.3.3</ecNumber>
    </recommendedName>
    <alternativeName>
        <fullName evidence="1">N-acetylneuraminate pyruvate-lyase</fullName>
    </alternativeName>
    <alternativeName>
        <fullName evidence="1">N-acetylneuraminic acid aldolase</fullName>
    </alternativeName>
    <alternativeName>
        <fullName evidence="1">Sialate lyase</fullName>
    </alternativeName>
    <alternativeName>
        <fullName evidence="1">Sialic acid aldolase</fullName>
    </alternativeName>
    <alternativeName>
        <fullName evidence="1">Sialic acid lyase</fullName>
    </alternativeName>
</protein>
<gene>
    <name evidence="1" type="primary">nanA</name>
    <name type="ordered locus">SeAg_B3530</name>
</gene>
<feature type="chain" id="PRO_1000139738" description="N-acetylneuraminate lyase">
    <location>
        <begin position="1"/>
        <end position="297"/>
    </location>
</feature>
<feature type="active site" description="Proton donor" evidence="1">
    <location>
        <position position="137"/>
    </location>
</feature>
<feature type="active site" description="Schiff-base intermediate with substrate" evidence="1">
    <location>
        <position position="165"/>
    </location>
</feature>
<feature type="binding site" evidence="1">
    <location>
        <position position="47"/>
    </location>
    <ligand>
        <name>aceneuramate</name>
        <dbReference type="ChEBI" id="CHEBI:173083"/>
    </ligand>
</feature>
<feature type="binding site" evidence="1">
    <location>
        <position position="48"/>
    </location>
    <ligand>
        <name>aceneuramate</name>
        <dbReference type="ChEBI" id="CHEBI:173083"/>
    </ligand>
</feature>
<feature type="binding site" evidence="1">
    <location>
        <position position="167"/>
    </location>
    <ligand>
        <name>aceneuramate</name>
        <dbReference type="ChEBI" id="CHEBI:173083"/>
    </ligand>
</feature>
<feature type="binding site" evidence="1">
    <location>
        <position position="189"/>
    </location>
    <ligand>
        <name>aceneuramate</name>
        <dbReference type="ChEBI" id="CHEBI:173083"/>
    </ligand>
</feature>
<feature type="binding site" evidence="1">
    <location>
        <position position="191"/>
    </location>
    <ligand>
        <name>aceneuramate</name>
        <dbReference type="ChEBI" id="CHEBI:173083"/>
    </ligand>
</feature>
<feature type="binding site" evidence="1">
    <location>
        <position position="192"/>
    </location>
    <ligand>
        <name>aceneuramate</name>
        <dbReference type="ChEBI" id="CHEBI:173083"/>
    </ligand>
</feature>
<feature type="binding site" evidence="1">
    <location>
        <position position="208"/>
    </location>
    <ligand>
        <name>aceneuramate</name>
        <dbReference type="ChEBI" id="CHEBI:173083"/>
    </ligand>
</feature>
<evidence type="ECO:0000255" key="1">
    <source>
        <dbReference type="HAMAP-Rule" id="MF_01237"/>
    </source>
</evidence>
<comment type="function">
    <text evidence="1">Catalyzes the reversible aldol cleavage of N-acetylneuraminic acid (sialic acid; Neu5Ac) to form pyruvate and N-acetylmannosamine (ManNAc) via a Schiff base intermediate.</text>
</comment>
<comment type="catalytic activity">
    <reaction evidence="1">
        <text>aceneuramate = aldehydo-N-acetyl-D-mannosamine + pyruvate</text>
        <dbReference type="Rhea" id="RHEA:23296"/>
        <dbReference type="ChEBI" id="CHEBI:15361"/>
        <dbReference type="ChEBI" id="CHEBI:17122"/>
        <dbReference type="ChEBI" id="CHEBI:173083"/>
        <dbReference type="EC" id="4.1.3.3"/>
    </reaction>
</comment>
<comment type="pathway">
    <text evidence="1">Amino-sugar metabolism; N-acetylneuraminate degradation; D-fructose 6-phosphate from N-acetylneuraminate: step 1/5.</text>
</comment>
<comment type="subunit">
    <text evidence="1">Homotetramer.</text>
</comment>
<comment type="subcellular location">
    <subcellularLocation>
        <location evidence="1">Cytoplasm</location>
    </subcellularLocation>
</comment>
<comment type="similarity">
    <text evidence="1">Belongs to the DapA family. NanA subfamily.</text>
</comment>
<proteinExistence type="inferred from homology"/>
<reference key="1">
    <citation type="journal article" date="2011" name="J. Bacteriol.">
        <title>Comparative genomics of 28 Salmonella enterica isolates: evidence for CRISPR-mediated adaptive sublineage evolution.</title>
        <authorList>
            <person name="Fricke W.F."/>
            <person name="Mammel M.K."/>
            <person name="McDermott P.F."/>
            <person name="Tartera C."/>
            <person name="White D.G."/>
            <person name="Leclerc J.E."/>
            <person name="Ravel J."/>
            <person name="Cebula T.A."/>
        </authorList>
    </citation>
    <scope>NUCLEOTIDE SEQUENCE [LARGE SCALE GENOMIC DNA]</scope>
    <source>
        <strain>SL483</strain>
    </source>
</reference>
<organism>
    <name type="scientific">Salmonella agona (strain SL483)</name>
    <dbReference type="NCBI Taxonomy" id="454166"/>
    <lineage>
        <taxon>Bacteria</taxon>
        <taxon>Pseudomonadati</taxon>
        <taxon>Pseudomonadota</taxon>
        <taxon>Gammaproteobacteria</taxon>
        <taxon>Enterobacterales</taxon>
        <taxon>Enterobacteriaceae</taxon>
        <taxon>Salmonella</taxon>
    </lineage>
</organism>
<dbReference type="EC" id="4.1.3.3" evidence="1"/>
<dbReference type="EMBL" id="CP001138">
    <property type="protein sequence ID" value="ACH49022.1"/>
    <property type="molecule type" value="Genomic_DNA"/>
</dbReference>
<dbReference type="RefSeq" id="WP_001029668.1">
    <property type="nucleotide sequence ID" value="NC_011149.1"/>
</dbReference>
<dbReference type="SMR" id="B5F7J9"/>
<dbReference type="KEGG" id="sea:SeAg_B3530"/>
<dbReference type="HOGENOM" id="CLU_049343_6_0_6"/>
<dbReference type="UniPathway" id="UPA00629">
    <property type="reaction ID" value="UER00680"/>
</dbReference>
<dbReference type="Proteomes" id="UP000008819">
    <property type="component" value="Chromosome"/>
</dbReference>
<dbReference type="GO" id="GO:0005829">
    <property type="term" value="C:cytosol"/>
    <property type="evidence" value="ECO:0007669"/>
    <property type="project" value="TreeGrafter"/>
</dbReference>
<dbReference type="GO" id="GO:0008747">
    <property type="term" value="F:N-acetylneuraminate lyase activity"/>
    <property type="evidence" value="ECO:0007669"/>
    <property type="project" value="UniProtKB-UniRule"/>
</dbReference>
<dbReference type="GO" id="GO:0005975">
    <property type="term" value="P:carbohydrate metabolic process"/>
    <property type="evidence" value="ECO:0007669"/>
    <property type="project" value="UniProtKB-UniRule"/>
</dbReference>
<dbReference type="GO" id="GO:0019262">
    <property type="term" value="P:N-acetylneuraminate catabolic process"/>
    <property type="evidence" value="ECO:0007669"/>
    <property type="project" value="UniProtKB-UniRule"/>
</dbReference>
<dbReference type="CDD" id="cd00954">
    <property type="entry name" value="NAL"/>
    <property type="match status" value="1"/>
</dbReference>
<dbReference type="FunFam" id="3.20.20.70:FF:000039">
    <property type="entry name" value="N-acetylneuraminate lyase"/>
    <property type="match status" value="1"/>
</dbReference>
<dbReference type="Gene3D" id="3.20.20.70">
    <property type="entry name" value="Aldolase class I"/>
    <property type="match status" value="1"/>
</dbReference>
<dbReference type="HAMAP" id="MF_01237">
    <property type="entry name" value="N_acetylneuram_lyase"/>
    <property type="match status" value="1"/>
</dbReference>
<dbReference type="InterPro" id="IPR013785">
    <property type="entry name" value="Aldolase_TIM"/>
</dbReference>
<dbReference type="InterPro" id="IPR002220">
    <property type="entry name" value="DapA-like"/>
</dbReference>
<dbReference type="InterPro" id="IPR005264">
    <property type="entry name" value="NanA"/>
</dbReference>
<dbReference type="InterPro" id="IPR020625">
    <property type="entry name" value="Schiff_base-form_aldolases_AS"/>
</dbReference>
<dbReference type="InterPro" id="IPR020624">
    <property type="entry name" value="Schiff_base-form_aldolases_CS"/>
</dbReference>
<dbReference type="NCBIfam" id="TIGR00683">
    <property type="entry name" value="nanA"/>
    <property type="match status" value="1"/>
</dbReference>
<dbReference type="NCBIfam" id="NF003164">
    <property type="entry name" value="PRK04147.1"/>
    <property type="match status" value="1"/>
</dbReference>
<dbReference type="PANTHER" id="PTHR42849">
    <property type="entry name" value="N-ACETYLNEURAMINATE LYASE"/>
    <property type="match status" value="1"/>
</dbReference>
<dbReference type="PANTHER" id="PTHR42849:SF1">
    <property type="entry name" value="N-ACETYLNEURAMINATE LYASE"/>
    <property type="match status" value="1"/>
</dbReference>
<dbReference type="Pfam" id="PF00701">
    <property type="entry name" value="DHDPS"/>
    <property type="match status" value="1"/>
</dbReference>
<dbReference type="PIRSF" id="PIRSF001365">
    <property type="entry name" value="DHDPS"/>
    <property type="match status" value="1"/>
</dbReference>
<dbReference type="PRINTS" id="PR00146">
    <property type="entry name" value="DHPICSNTHASE"/>
</dbReference>
<dbReference type="SMART" id="SM01130">
    <property type="entry name" value="DHDPS"/>
    <property type="match status" value="1"/>
</dbReference>
<dbReference type="SUPFAM" id="SSF51569">
    <property type="entry name" value="Aldolase"/>
    <property type="match status" value="1"/>
</dbReference>
<dbReference type="PROSITE" id="PS00665">
    <property type="entry name" value="DHDPS_1"/>
    <property type="match status" value="1"/>
</dbReference>
<dbReference type="PROSITE" id="PS00666">
    <property type="entry name" value="DHDPS_2"/>
    <property type="match status" value="1"/>
</dbReference>
<sequence length="297" mass="32421">MAKALQGVMAALLTPFDHQQQLDSESLRRLVRFNIGQGIDGLYVGGSTGEAFVQSLAEREQVLEIVAEEAKGKITLIAHVGTVSTAESQQLASAAKRYGFDAVSAVTPFYYPFSFEEHCDHYRAIIDSADGLPMVVYNIPALSGVKLTLDQINTLVTLPGVSALKQTSGDLFQMEQIRRAHPDLVLYNGYDEIFASGLLAGADGGIGSTYNIMGWRYQGIVQALREGDVAKAQRLQTECNKVIDLLIKTGVFRGLKTVLHYMDVVSVPLCRKPLAPVDEKYLPALKALAQQLMEEKA</sequence>
<name>NANA_SALA4</name>